<comment type="function">
    <text evidence="1">Catalyzes the attachment of threonine to tRNA(Thr) in a two-step reaction: L-threonine is first activated by ATP to form Thr-AMP and then transferred to the acceptor end of tRNA(Thr). Also edits incorrectly charged L-seryl-tRNA(Thr).</text>
</comment>
<comment type="catalytic activity">
    <reaction evidence="1">
        <text>tRNA(Thr) + L-threonine + ATP = L-threonyl-tRNA(Thr) + AMP + diphosphate + H(+)</text>
        <dbReference type="Rhea" id="RHEA:24624"/>
        <dbReference type="Rhea" id="RHEA-COMP:9670"/>
        <dbReference type="Rhea" id="RHEA-COMP:9704"/>
        <dbReference type="ChEBI" id="CHEBI:15378"/>
        <dbReference type="ChEBI" id="CHEBI:30616"/>
        <dbReference type="ChEBI" id="CHEBI:33019"/>
        <dbReference type="ChEBI" id="CHEBI:57926"/>
        <dbReference type="ChEBI" id="CHEBI:78442"/>
        <dbReference type="ChEBI" id="CHEBI:78534"/>
        <dbReference type="ChEBI" id="CHEBI:456215"/>
        <dbReference type="EC" id="6.1.1.3"/>
    </reaction>
</comment>
<comment type="cofactor">
    <cofactor evidence="1">
        <name>Zn(2+)</name>
        <dbReference type="ChEBI" id="CHEBI:29105"/>
    </cofactor>
    <text evidence="1">Binds 1 zinc ion per subunit.</text>
</comment>
<comment type="subunit">
    <text evidence="1">Homodimer.</text>
</comment>
<comment type="subcellular location">
    <subcellularLocation>
        <location evidence="1">Cytoplasm</location>
    </subcellularLocation>
</comment>
<comment type="similarity">
    <text evidence="1">Belongs to the class-II aminoacyl-tRNA synthetase family.</text>
</comment>
<name>SYT_XYLF2</name>
<protein>
    <recommendedName>
        <fullName evidence="1">Threonine--tRNA ligase</fullName>
        <ecNumber evidence="1">6.1.1.3</ecNumber>
    </recommendedName>
    <alternativeName>
        <fullName evidence="1">Threonyl-tRNA synthetase</fullName>
        <shortName evidence="1">ThrRS</shortName>
    </alternativeName>
</protein>
<evidence type="ECO:0000255" key="1">
    <source>
        <dbReference type="HAMAP-Rule" id="MF_00184"/>
    </source>
</evidence>
<evidence type="ECO:0000255" key="2">
    <source>
        <dbReference type="PROSITE-ProRule" id="PRU01228"/>
    </source>
</evidence>
<accession>B2I9P8</accession>
<proteinExistence type="inferred from homology"/>
<dbReference type="EC" id="6.1.1.3" evidence="1"/>
<dbReference type="EMBL" id="CP001011">
    <property type="protein sequence ID" value="ACB93419.1"/>
    <property type="molecule type" value="Genomic_DNA"/>
</dbReference>
<dbReference type="RefSeq" id="WP_004090399.1">
    <property type="nucleotide sequence ID" value="NC_010577.1"/>
</dbReference>
<dbReference type="SMR" id="B2I9P8"/>
<dbReference type="GeneID" id="93905776"/>
<dbReference type="KEGG" id="xfn:XfasM23_2020"/>
<dbReference type="HOGENOM" id="CLU_008554_0_1_6"/>
<dbReference type="Proteomes" id="UP000001698">
    <property type="component" value="Chromosome"/>
</dbReference>
<dbReference type="GO" id="GO:0005829">
    <property type="term" value="C:cytosol"/>
    <property type="evidence" value="ECO:0007669"/>
    <property type="project" value="TreeGrafter"/>
</dbReference>
<dbReference type="GO" id="GO:0005524">
    <property type="term" value="F:ATP binding"/>
    <property type="evidence" value="ECO:0007669"/>
    <property type="project" value="UniProtKB-UniRule"/>
</dbReference>
<dbReference type="GO" id="GO:0046872">
    <property type="term" value="F:metal ion binding"/>
    <property type="evidence" value="ECO:0007669"/>
    <property type="project" value="UniProtKB-KW"/>
</dbReference>
<dbReference type="GO" id="GO:0004829">
    <property type="term" value="F:threonine-tRNA ligase activity"/>
    <property type="evidence" value="ECO:0007669"/>
    <property type="project" value="UniProtKB-UniRule"/>
</dbReference>
<dbReference type="GO" id="GO:0000049">
    <property type="term" value="F:tRNA binding"/>
    <property type="evidence" value="ECO:0007669"/>
    <property type="project" value="UniProtKB-KW"/>
</dbReference>
<dbReference type="GO" id="GO:0006435">
    <property type="term" value="P:threonyl-tRNA aminoacylation"/>
    <property type="evidence" value="ECO:0007669"/>
    <property type="project" value="UniProtKB-UniRule"/>
</dbReference>
<dbReference type="CDD" id="cd01667">
    <property type="entry name" value="TGS_ThrRS"/>
    <property type="match status" value="1"/>
</dbReference>
<dbReference type="CDD" id="cd00860">
    <property type="entry name" value="ThrRS_anticodon"/>
    <property type="match status" value="1"/>
</dbReference>
<dbReference type="CDD" id="cd00771">
    <property type="entry name" value="ThrRS_core"/>
    <property type="match status" value="1"/>
</dbReference>
<dbReference type="FunFam" id="3.10.20.30:FF:000005">
    <property type="entry name" value="Threonine--tRNA ligase"/>
    <property type="match status" value="1"/>
</dbReference>
<dbReference type="FunFam" id="3.30.54.20:FF:000002">
    <property type="entry name" value="Threonine--tRNA ligase"/>
    <property type="match status" value="1"/>
</dbReference>
<dbReference type="FunFam" id="3.30.930.10:FF:000002">
    <property type="entry name" value="Threonine--tRNA ligase"/>
    <property type="match status" value="1"/>
</dbReference>
<dbReference type="FunFam" id="3.40.50.800:FF:000001">
    <property type="entry name" value="Threonine--tRNA ligase"/>
    <property type="match status" value="1"/>
</dbReference>
<dbReference type="FunFam" id="3.30.980.10:FF:000005">
    <property type="entry name" value="Threonyl-tRNA synthetase, mitochondrial"/>
    <property type="match status" value="1"/>
</dbReference>
<dbReference type="Gene3D" id="3.10.20.30">
    <property type="match status" value="1"/>
</dbReference>
<dbReference type="Gene3D" id="3.30.54.20">
    <property type="match status" value="1"/>
</dbReference>
<dbReference type="Gene3D" id="3.40.50.800">
    <property type="entry name" value="Anticodon-binding domain"/>
    <property type="match status" value="1"/>
</dbReference>
<dbReference type="Gene3D" id="3.30.930.10">
    <property type="entry name" value="Bira Bifunctional Protein, Domain 2"/>
    <property type="match status" value="1"/>
</dbReference>
<dbReference type="Gene3D" id="3.30.980.10">
    <property type="entry name" value="Threonyl-trna Synthetase, Chain A, domain 2"/>
    <property type="match status" value="1"/>
</dbReference>
<dbReference type="HAMAP" id="MF_00184">
    <property type="entry name" value="Thr_tRNA_synth"/>
    <property type="match status" value="1"/>
</dbReference>
<dbReference type="InterPro" id="IPR002314">
    <property type="entry name" value="aa-tRNA-synt_IIb"/>
</dbReference>
<dbReference type="InterPro" id="IPR006195">
    <property type="entry name" value="aa-tRNA-synth_II"/>
</dbReference>
<dbReference type="InterPro" id="IPR045864">
    <property type="entry name" value="aa-tRNA-synth_II/BPL/LPL"/>
</dbReference>
<dbReference type="InterPro" id="IPR004154">
    <property type="entry name" value="Anticodon-bd"/>
</dbReference>
<dbReference type="InterPro" id="IPR036621">
    <property type="entry name" value="Anticodon-bd_dom_sf"/>
</dbReference>
<dbReference type="InterPro" id="IPR012675">
    <property type="entry name" value="Beta-grasp_dom_sf"/>
</dbReference>
<dbReference type="InterPro" id="IPR004095">
    <property type="entry name" value="TGS"/>
</dbReference>
<dbReference type="InterPro" id="IPR012676">
    <property type="entry name" value="TGS-like"/>
</dbReference>
<dbReference type="InterPro" id="IPR002320">
    <property type="entry name" value="Thr-tRNA-ligase_IIa"/>
</dbReference>
<dbReference type="InterPro" id="IPR018163">
    <property type="entry name" value="Thr/Ala-tRNA-synth_IIc_edit"/>
</dbReference>
<dbReference type="InterPro" id="IPR047246">
    <property type="entry name" value="ThrRS_anticodon"/>
</dbReference>
<dbReference type="InterPro" id="IPR033728">
    <property type="entry name" value="ThrRS_core"/>
</dbReference>
<dbReference type="InterPro" id="IPR012947">
    <property type="entry name" value="tRNA_SAD"/>
</dbReference>
<dbReference type="NCBIfam" id="TIGR00418">
    <property type="entry name" value="thrS"/>
    <property type="match status" value="1"/>
</dbReference>
<dbReference type="PANTHER" id="PTHR11451:SF44">
    <property type="entry name" value="THREONINE--TRNA LIGASE, CHLOROPLASTIC_MITOCHONDRIAL 2"/>
    <property type="match status" value="1"/>
</dbReference>
<dbReference type="PANTHER" id="PTHR11451">
    <property type="entry name" value="THREONINE-TRNA LIGASE"/>
    <property type="match status" value="1"/>
</dbReference>
<dbReference type="Pfam" id="PF03129">
    <property type="entry name" value="HGTP_anticodon"/>
    <property type="match status" value="1"/>
</dbReference>
<dbReference type="Pfam" id="PF02824">
    <property type="entry name" value="TGS"/>
    <property type="match status" value="1"/>
</dbReference>
<dbReference type="Pfam" id="PF00587">
    <property type="entry name" value="tRNA-synt_2b"/>
    <property type="match status" value="1"/>
</dbReference>
<dbReference type="Pfam" id="PF07973">
    <property type="entry name" value="tRNA_SAD"/>
    <property type="match status" value="1"/>
</dbReference>
<dbReference type="PRINTS" id="PR01047">
    <property type="entry name" value="TRNASYNTHTHR"/>
</dbReference>
<dbReference type="SMART" id="SM00863">
    <property type="entry name" value="tRNA_SAD"/>
    <property type="match status" value="1"/>
</dbReference>
<dbReference type="SUPFAM" id="SSF52954">
    <property type="entry name" value="Class II aaRS ABD-related"/>
    <property type="match status" value="1"/>
</dbReference>
<dbReference type="SUPFAM" id="SSF55681">
    <property type="entry name" value="Class II aaRS and biotin synthetases"/>
    <property type="match status" value="1"/>
</dbReference>
<dbReference type="SUPFAM" id="SSF81271">
    <property type="entry name" value="TGS-like"/>
    <property type="match status" value="1"/>
</dbReference>
<dbReference type="SUPFAM" id="SSF55186">
    <property type="entry name" value="ThrRS/AlaRS common domain"/>
    <property type="match status" value="1"/>
</dbReference>
<dbReference type="PROSITE" id="PS50862">
    <property type="entry name" value="AA_TRNA_LIGASE_II"/>
    <property type="match status" value="1"/>
</dbReference>
<dbReference type="PROSITE" id="PS51880">
    <property type="entry name" value="TGS"/>
    <property type="match status" value="1"/>
</dbReference>
<sequence>MITITLPDGSRREFEGPVSVMQVAHAIGPGLAKATIAGQIDGGHLVDASDLIEHDAILRIITPEDQEALEIIRHSCAHLVGHAVKQLYPEAKMVIGPVIADGFYYDIYSKRPFTPEDLAAIEQRMVELIAQDYDVVKHITARHDVVRLFKERGEDYKLRLIEDMGPEVTAMGIYHHQEYVDMCRGPHVPNTRFLKAFRLTRISGAYWRGNTKNEQLQRIYGTAWADKKQLEAYMQRLQDAEKRDHRKIGKAQDLFHLQEEGPGLVFWHPKGWVIWQTIENYIRRVYRNSGYGELRCPQILDVSLWQKSGHWDNYKENMFFTDSEKRTYAVKPMNCPGHVQVFNQGLHSYRDLPIRYGEFGACHRNEPSGALHGLLRVRGFTQDDGHIFCTEAQIEAEVTAFHRQALQVYADFGFENIQIKIALRPDKRLGDSLSWDKAEAALRAALSACEVEWQELPGEGAFYGPKIEYHLKDAIGRTWQLGTIQVDFMMPARLGAEYVDERSQRRHPVMLHRAIVGSMERFIGILIEHYAGIWPTWLAPVQVVIANITDAQYEYAEQVHKALLNQGFRVNIDLRNEKIGYKIREHTLQRVPYLLVVGDREKENGTVAVRTCSREDLGAMSISTFVERLQTEQVV</sequence>
<feature type="chain" id="PRO_1000098629" description="Threonine--tRNA ligase">
    <location>
        <begin position="1"/>
        <end position="635"/>
    </location>
</feature>
<feature type="domain" description="TGS" evidence="2">
    <location>
        <begin position="1"/>
        <end position="62"/>
    </location>
</feature>
<feature type="region of interest" description="Catalytic" evidence="1">
    <location>
        <begin position="244"/>
        <end position="535"/>
    </location>
</feature>
<feature type="binding site" evidence="1">
    <location>
        <position position="335"/>
    </location>
    <ligand>
        <name>Zn(2+)</name>
        <dbReference type="ChEBI" id="CHEBI:29105"/>
    </ligand>
</feature>
<feature type="binding site" evidence="1">
    <location>
        <position position="386"/>
    </location>
    <ligand>
        <name>Zn(2+)</name>
        <dbReference type="ChEBI" id="CHEBI:29105"/>
    </ligand>
</feature>
<feature type="binding site" evidence="1">
    <location>
        <position position="512"/>
    </location>
    <ligand>
        <name>Zn(2+)</name>
        <dbReference type="ChEBI" id="CHEBI:29105"/>
    </ligand>
</feature>
<reference key="1">
    <citation type="journal article" date="2010" name="J. Bacteriol.">
        <title>Whole genome sequences of two Xylella fastidiosa strains (M12 and M23) causing almond leaf scorch disease in California.</title>
        <authorList>
            <person name="Chen J."/>
            <person name="Xie G."/>
            <person name="Han S."/>
            <person name="Chertkov O."/>
            <person name="Sims D."/>
            <person name="Civerolo E.L."/>
        </authorList>
    </citation>
    <scope>NUCLEOTIDE SEQUENCE [LARGE SCALE GENOMIC DNA]</scope>
    <source>
        <strain>M23</strain>
    </source>
</reference>
<organism>
    <name type="scientific">Xylella fastidiosa (strain M23)</name>
    <dbReference type="NCBI Taxonomy" id="405441"/>
    <lineage>
        <taxon>Bacteria</taxon>
        <taxon>Pseudomonadati</taxon>
        <taxon>Pseudomonadota</taxon>
        <taxon>Gammaproteobacteria</taxon>
        <taxon>Lysobacterales</taxon>
        <taxon>Lysobacteraceae</taxon>
        <taxon>Xylella</taxon>
    </lineage>
</organism>
<gene>
    <name evidence="1" type="primary">thrS</name>
    <name type="ordered locus">XfasM23_2020</name>
</gene>
<keyword id="KW-0030">Aminoacyl-tRNA synthetase</keyword>
<keyword id="KW-0067">ATP-binding</keyword>
<keyword id="KW-0963">Cytoplasm</keyword>
<keyword id="KW-0436">Ligase</keyword>
<keyword id="KW-0479">Metal-binding</keyword>
<keyword id="KW-0547">Nucleotide-binding</keyword>
<keyword id="KW-0648">Protein biosynthesis</keyword>
<keyword id="KW-0694">RNA-binding</keyword>
<keyword id="KW-0820">tRNA-binding</keyword>
<keyword id="KW-0862">Zinc</keyword>